<dbReference type="EC" id="3.2.1.1" evidence="2"/>
<dbReference type="EMBL" id="X56338">
    <property type="protein sequence ID" value="CAA39778.1"/>
    <property type="molecule type" value="Genomic_DNA"/>
</dbReference>
<dbReference type="EMBL" id="AP005891">
    <property type="protein sequence ID" value="BAD38369.1"/>
    <property type="molecule type" value="Genomic_DNA"/>
</dbReference>
<dbReference type="EMBL" id="AP008215">
    <property type="protein sequence ID" value="BAF25283.1"/>
    <property type="molecule type" value="Genomic_DNA"/>
</dbReference>
<dbReference type="EMBL" id="AP014965">
    <property type="protein sequence ID" value="BAT08444.1"/>
    <property type="molecule type" value="Genomic_DNA"/>
</dbReference>
<dbReference type="EMBL" id="CM000146">
    <property type="protein sequence ID" value="EAZ44990.1"/>
    <property type="molecule type" value="Genomic_DNA"/>
</dbReference>
<dbReference type="EMBL" id="AK101358">
    <property type="status" value="NOT_ANNOTATED_CDS"/>
    <property type="molecule type" value="mRNA"/>
</dbReference>
<dbReference type="PIR" id="S14956">
    <property type="entry name" value="S14956"/>
</dbReference>
<dbReference type="RefSeq" id="XP_015612114.1">
    <property type="nucleotide sequence ID" value="XM_015756628.1"/>
</dbReference>
<dbReference type="SMR" id="P27939"/>
<dbReference type="FunCoup" id="P27939">
    <property type="interactions" value="259"/>
</dbReference>
<dbReference type="STRING" id="39947.P27939"/>
<dbReference type="CAZy" id="GH13">
    <property type="family name" value="Glycoside Hydrolase Family 13"/>
</dbReference>
<dbReference type="PaxDb" id="39947-P27939"/>
<dbReference type="EnsemblPlants" id="Os09t0457800-01">
    <property type="protein sequence ID" value="Os09t0457800-01"/>
    <property type="gene ID" value="Os09g0457800"/>
</dbReference>
<dbReference type="Gramene" id="Os09t0457800-01">
    <property type="protein sequence ID" value="Os09t0457800-01"/>
    <property type="gene ID" value="Os09g0457800"/>
</dbReference>
<dbReference type="KEGG" id="dosa:Os09g0457800"/>
<dbReference type="eggNOG" id="KOG0471">
    <property type="taxonomic scope" value="Eukaryota"/>
</dbReference>
<dbReference type="HOGENOM" id="CLU_030069_1_0_1"/>
<dbReference type="InParanoid" id="P27939"/>
<dbReference type="OMA" id="CVVIMSN"/>
<dbReference type="Proteomes" id="UP000000763">
    <property type="component" value="Chromosome 9"/>
</dbReference>
<dbReference type="Proteomes" id="UP000007752">
    <property type="component" value="Chromosome 9"/>
</dbReference>
<dbReference type="Proteomes" id="UP000059680">
    <property type="component" value="Chromosome 9"/>
</dbReference>
<dbReference type="ExpressionAtlas" id="P27939">
    <property type="expression patterns" value="baseline and differential"/>
</dbReference>
<dbReference type="GO" id="GO:0004556">
    <property type="term" value="F:alpha-amylase activity"/>
    <property type="evidence" value="ECO:0000250"/>
    <property type="project" value="Gramene"/>
</dbReference>
<dbReference type="GO" id="GO:0005509">
    <property type="term" value="F:calcium ion binding"/>
    <property type="evidence" value="ECO:0007669"/>
    <property type="project" value="InterPro"/>
</dbReference>
<dbReference type="GO" id="GO:0005983">
    <property type="term" value="P:starch catabolic process"/>
    <property type="evidence" value="ECO:0000250"/>
    <property type="project" value="Gramene"/>
</dbReference>
<dbReference type="GO" id="GO:0005987">
    <property type="term" value="P:sucrose catabolic process"/>
    <property type="evidence" value="ECO:0000250"/>
    <property type="project" value="Gramene"/>
</dbReference>
<dbReference type="CDD" id="cd11314">
    <property type="entry name" value="AmyAc_arch_bac_plant_AmyA"/>
    <property type="match status" value="1"/>
</dbReference>
<dbReference type="FunFam" id="2.60.40.1180:FF:000021">
    <property type="entry name" value="Alpha-amylase"/>
    <property type="match status" value="1"/>
</dbReference>
<dbReference type="Gene3D" id="3.20.20.80">
    <property type="entry name" value="Glycosidases"/>
    <property type="match status" value="1"/>
</dbReference>
<dbReference type="Gene3D" id="2.60.40.1180">
    <property type="entry name" value="Golgi alpha-mannosidase II"/>
    <property type="match status" value="1"/>
</dbReference>
<dbReference type="InterPro" id="IPR012850">
    <property type="entry name" value="A-amylase_bs_C"/>
</dbReference>
<dbReference type="InterPro" id="IPR013775">
    <property type="entry name" value="A-amylase_pln"/>
</dbReference>
<dbReference type="InterPro" id="IPR006046">
    <property type="entry name" value="Alpha_amylase"/>
</dbReference>
<dbReference type="InterPro" id="IPR006047">
    <property type="entry name" value="Glyco_hydro_13_cat_dom"/>
</dbReference>
<dbReference type="InterPro" id="IPR013780">
    <property type="entry name" value="Glyco_hydro_b"/>
</dbReference>
<dbReference type="InterPro" id="IPR017853">
    <property type="entry name" value="Glycoside_hydrolase_SF"/>
</dbReference>
<dbReference type="PANTHER" id="PTHR43447">
    <property type="entry name" value="ALPHA-AMYLASE"/>
    <property type="match status" value="1"/>
</dbReference>
<dbReference type="Pfam" id="PF07821">
    <property type="entry name" value="Alpha-amyl_C2"/>
    <property type="match status" value="1"/>
</dbReference>
<dbReference type="Pfam" id="PF00128">
    <property type="entry name" value="Alpha-amylase"/>
    <property type="match status" value="1"/>
</dbReference>
<dbReference type="PIRSF" id="PIRSF001028">
    <property type="entry name" value="Alph-amls_plant"/>
    <property type="match status" value="1"/>
</dbReference>
<dbReference type="PRINTS" id="PR00110">
    <property type="entry name" value="ALPHAAMYLASE"/>
</dbReference>
<dbReference type="SMART" id="SM00642">
    <property type="entry name" value="Aamy"/>
    <property type="match status" value="1"/>
</dbReference>
<dbReference type="SMART" id="SM00810">
    <property type="entry name" value="Alpha-amyl_C2"/>
    <property type="match status" value="1"/>
</dbReference>
<dbReference type="SUPFAM" id="SSF51445">
    <property type="entry name" value="(Trans)glycosidases"/>
    <property type="match status" value="1"/>
</dbReference>
<dbReference type="SUPFAM" id="SSF51011">
    <property type="entry name" value="Glycosyl hydrolase domain"/>
    <property type="match status" value="1"/>
</dbReference>
<accession>P27939</accession>
<accession>A0A0P0XPD0</accession>
<accession>Q0J182</accession>
<accession>Q67U02</accession>
<feature type="signal peptide" evidence="3">
    <location>
        <begin position="1"/>
        <end position="26"/>
    </location>
</feature>
<feature type="chain" id="PRO_0000001414" description="Alpha-amylase isozyme 3C">
    <location>
        <begin position="27"/>
        <end position="437"/>
    </location>
</feature>
<feature type="active site" description="Nucleophile" evidence="2">
    <location>
        <position position="205"/>
    </location>
</feature>
<feature type="active site" description="Proton donor" evidence="2">
    <location>
        <position position="230"/>
    </location>
</feature>
<feature type="binding site" evidence="2">
    <location>
        <begin position="70"/>
        <end position="72"/>
    </location>
    <ligand>
        <name>substrate</name>
    </ligand>
</feature>
<feature type="binding site" evidence="2">
    <location>
        <begin position="77"/>
        <end position="78"/>
    </location>
    <ligand>
        <name>substrate</name>
    </ligand>
</feature>
<feature type="binding site" evidence="2">
    <location>
        <position position="117"/>
    </location>
    <ligand>
        <name>Ca(2+)</name>
        <dbReference type="ChEBI" id="CHEBI:29108"/>
        <label>1</label>
    </ligand>
</feature>
<feature type="binding site" evidence="2">
    <location>
        <position position="134"/>
    </location>
    <ligand>
        <name>Ca(2+)</name>
        <dbReference type="ChEBI" id="CHEBI:29108"/>
        <label>2</label>
    </ligand>
</feature>
<feature type="binding site" evidence="2">
    <location>
        <position position="137"/>
    </location>
    <ligand>
        <name>Ca(2+)</name>
        <dbReference type="ChEBI" id="CHEBI:29108"/>
        <label>2</label>
    </ligand>
</feature>
<feature type="binding site" evidence="2">
    <location>
        <position position="139"/>
    </location>
    <ligand>
        <name>Ca(2+)</name>
        <dbReference type="ChEBI" id="CHEBI:29108"/>
        <label>2</label>
    </ligand>
</feature>
<feature type="binding site" evidence="2">
    <location>
        <position position="143"/>
    </location>
    <ligand>
        <name>Ca(2+)</name>
        <dbReference type="ChEBI" id="CHEBI:29108"/>
        <label>2</label>
    </ligand>
</feature>
<feature type="binding site" evidence="2">
    <location>
        <position position="153"/>
    </location>
    <ligand>
        <name>Ca(2+)</name>
        <dbReference type="ChEBI" id="CHEBI:29108"/>
        <label>3</label>
    </ligand>
</feature>
<feature type="binding site" evidence="2">
    <location>
        <position position="164"/>
    </location>
    <ligand>
        <name>Ca(2+)</name>
        <dbReference type="ChEBI" id="CHEBI:29108"/>
        <label>1</label>
    </ligand>
</feature>
<feature type="binding site" evidence="2">
    <location>
        <position position="167"/>
    </location>
    <ligand>
        <name>Ca(2+)</name>
        <dbReference type="ChEBI" id="CHEBI:29108"/>
        <label>1</label>
    </ligand>
</feature>
<feature type="binding site" evidence="2">
    <location>
        <position position="168"/>
    </location>
    <ligand>
        <name>Ca(2+)</name>
        <dbReference type="ChEBI" id="CHEBI:29108"/>
        <label>3</label>
    </ligand>
</feature>
<feature type="binding site" evidence="2">
    <location>
        <position position="169"/>
    </location>
    <ligand>
        <name>Ca(2+)</name>
        <dbReference type="ChEBI" id="CHEBI:29108"/>
        <label>3</label>
    </ligand>
</feature>
<feature type="binding site" evidence="2">
    <location>
        <position position="172"/>
    </location>
    <ligand>
        <name>Ca(2+)</name>
        <dbReference type="ChEBI" id="CHEBI:29108"/>
        <label>3</label>
    </ligand>
</feature>
<feature type="binding site" evidence="2">
    <location>
        <position position="174"/>
    </location>
    <ligand>
        <name>Ca(2+)</name>
        <dbReference type="ChEBI" id="CHEBI:29108"/>
        <label>1</label>
    </ligand>
</feature>
<feature type="binding site" evidence="2">
    <location>
        <position position="174"/>
    </location>
    <ligand>
        <name>Ca(2+)</name>
        <dbReference type="ChEBI" id="CHEBI:29108"/>
        <label>3</label>
    </ligand>
</feature>
<feature type="binding site" evidence="2">
    <location>
        <begin position="203"/>
        <end position="208"/>
    </location>
    <ligand>
        <name>substrate</name>
    </ligand>
</feature>
<feature type="binding site" evidence="2">
    <location>
        <position position="209"/>
    </location>
    <ligand>
        <name>Ca(2+)</name>
        <dbReference type="ChEBI" id="CHEBI:29108"/>
        <label>1</label>
    </ligand>
</feature>
<feature type="binding site" evidence="2">
    <location>
        <position position="232"/>
    </location>
    <ligand>
        <name>substrate</name>
    </ligand>
</feature>
<feature type="binding site" evidence="2">
    <location>
        <position position="234"/>
    </location>
    <ligand>
        <name>substrate</name>
    </ligand>
</feature>
<feature type="binding site" evidence="2">
    <location>
        <position position="252"/>
    </location>
    <ligand>
        <name>substrate</name>
    </ligand>
</feature>
<feature type="binding site" evidence="2">
    <location>
        <position position="293"/>
    </location>
    <ligand>
        <name>substrate</name>
    </ligand>
</feature>
<feature type="binding site" evidence="2">
    <location>
        <begin position="299"/>
        <end position="301"/>
    </location>
    <ligand>
        <name>substrate</name>
    </ligand>
</feature>
<feature type="binding site" evidence="2">
    <location>
        <position position="312"/>
    </location>
    <ligand>
        <name>substrate</name>
    </ligand>
</feature>
<feature type="binding site" evidence="2">
    <location>
        <position position="318"/>
    </location>
    <ligand>
        <name>substrate</name>
    </ligand>
</feature>
<feature type="binding site" evidence="2">
    <location>
        <position position="397"/>
    </location>
    <ligand>
        <name>substrate</name>
    </ligand>
</feature>
<feature type="binding site" evidence="2">
    <location>
        <begin position="402"/>
        <end position="404"/>
    </location>
    <ligand>
        <name>substrate</name>
    </ligand>
</feature>
<feature type="binding site" evidence="2">
    <location>
        <begin position="414"/>
        <end position="420"/>
    </location>
    <ligand>
        <name>substrate</name>
    </ligand>
</feature>
<feature type="binding site" evidence="2">
    <location>
        <position position="424"/>
    </location>
    <ligand>
        <name>substrate</name>
    </ligand>
</feature>
<feature type="site" description="Transition state stabilizer" evidence="2">
    <location>
        <position position="313"/>
    </location>
</feature>
<feature type="sequence conflict" description="In Ref. 1; CAA39778." evidence="4" ref="1">
    <original>K</original>
    <variation>N</variation>
    <location>
        <position position="39"/>
    </location>
</feature>
<feature type="sequence conflict" description="In Ref. 1; CAA39778." evidence="4" ref="1">
    <original>D</original>
    <variation>Y</variation>
    <location>
        <position position="54"/>
    </location>
</feature>
<feature type="sequence conflict" description="In Ref. 6; AK101358." evidence="4" ref="6">
    <original>P</original>
    <variation>S</variation>
    <location>
        <position position="66"/>
    </location>
</feature>
<feature type="sequence conflict" description="In Ref. 1; CAA39778." evidence="4" ref="1">
    <original>G</original>
    <variation>R</variation>
    <location>
        <position position="331"/>
    </location>
</feature>
<organism>
    <name type="scientific">Oryza sativa subsp. japonica</name>
    <name type="common">Rice</name>
    <dbReference type="NCBI Taxonomy" id="39947"/>
    <lineage>
        <taxon>Eukaryota</taxon>
        <taxon>Viridiplantae</taxon>
        <taxon>Streptophyta</taxon>
        <taxon>Embryophyta</taxon>
        <taxon>Tracheophyta</taxon>
        <taxon>Spermatophyta</taxon>
        <taxon>Magnoliopsida</taxon>
        <taxon>Liliopsida</taxon>
        <taxon>Poales</taxon>
        <taxon>Poaceae</taxon>
        <taxon>BOP clade</taxon>
        <taxon>Oryzoideae</taxon>
        <taxon>Oryzeae</taxon>
        <taxon>Oryzinae</taxon>
        <taxon>Oryza</taxon>
        <taxon>Oryza sativa</taxon>
    </lineage>
</organism>
<name>AMY3C_ORYSJ</name>
<keyword id="KW-0106">Calcium</keyword>
<keyword id="KW-0119">Carbohydrate metabolism</keyword>
<keyword id="KW-0326">Glycosidase</keyword>
<keyword id="KW-0378">Hydrolase</keyword>
<keyword id="KW-0479">Metal-binding</keyword>
<keyword id="KW-1185">Reference proteome</keyword>
<keyword id="KW-0732">Signal</keyword>
<sequence length="437" mass="48504">MAKHSTTMSCLLFFVLLCLGSHLAQAQVLFQGFNWESWKKQGGWYNFLHSHVDDIAATGVTHVWLPPPSHSVAPQGYMPGRLYDLDASKYGTGAELRSLIAAFHSKSIKCVADIVINHRCADYKDSRGIYCIFEGGTPDSRLDWGPDMICSDDTQYSNGRGHRDTGADFGAAPDIDHLNTRVQTELSDWLNWLKSDVGFDGWRLDFAKGYSATVAKTYVDNTDPSFVVAEIWSNMRYDGNGEPSWNQDGDRQELVNWAQAVGGPASAFDFTTKGELQAAVQGELWRMKDGNGKAPGMIGWLPEKAVTFIDNHDTGSTQNSWPFPSDKVMQGYAYILTHPGVPCIFYDHVFDWNLKQEISTLAAVRSRNGIHPGSKLNILAADGDVYVAMIDDKVITKIGTRYDVGNLIPSDFHVVAHGNNYCVWEKSGLRVPAGRRH</sequence>
<comment type="function">
    <text>Important for breakdown of endosperm starch during germination.</text>
</comment>
<comment type="catalytic activity">
    <reaction evidence="2">
        <text>Endohydrolysis of (1-&gt;4)-alpha-D-glucosidic linkages in polysaccharides containing three or more (1-&gt;4)-alpha-linked D-glucose units.</text>
        <dbReference type="EC" id="3.2.1.1"/>
    </reaction>
</comment>
<comment type="cofactor">
    <cofactor evidence="2">
        <name>Ca(2+)</name>
        <dbReference type="ChEBI" id="CHEBI:29108"/>
    </cofactor>
    <text evidence="2">Binds 3 Ca(2+) ions per subunit.</text>
</comment>
<comment type="subunit">
    <text>Monomer.</text>
</comment>
<comment type="tissue specificity">
    <text>Germinating seeds.</text>
</comment>
<comment type="developmental stage">
    <text>Expressed at a high level during germination in the aleurones cells under the control of the plant hormone gibberellic acid and in the developing grains at a low level.</text>
</comment>
<comment type="miscellaneous">
    <text evidence="1">Binds starch not only at the active site, but also via accessory binding sites on the protein surface that are important for efficient binding to starch granules and thereby increase enzyme activity.</text>
</comment>
<comment type="similarity">
    <text evidence="4">Belongs to the glycosyl hydrolase 13 family.</text>
</comment>
<reference key="1">
    <citation type="journal article" date="1991" name="Plant Mol. Biol.">
        <title>Characterization of an alpha-amylase multigene cluster in rice.</title>
        <authorList>
            <person name="Sutliff T.D."/>
            <person name="Huang N."/>
            <person name="Litts J.C."/>
            <person name="Rodriguez R.L."/>
        </authorList>
    </citation>
    <scope>NUCLEOTIDE SEQUENCE [GENOMIC DNA]</scope>
    <source>
        <strain>cv. M202</strain>
        <tissue>Etiolated leaf</tissue>
    </source>
</reference>
<reference key="2">
    <citation type="journal article" date="2005" name="Nature">
        <title>The map-based sequence of the rice genome.</title>
        <authorList>
            <consortium name="International rice genome sequencing project (IRGSP)"/>
        </authorList>
    </citation>
    <scope>NUCLEOTIDE SEQUENCE [LARGE SCALE GENOMIC DNA]</scope>
    <source>
        <strain>cv. Nipponbare</strain>
    </source>
</reference>
<reference key="3">
    <citation type="journal article" date="2008" name="Nucleic Acids Res.">
        <title>The rice annotation project database (RAP-DB): 2008 update.</title>
        <authorList>
            <consortium name="The rice annotation project (RAP)"/>
        </authorList>
    </citation>
    <scope>GENOME REANNOTATION</scope>
    <source>
        <strain>cv. Nipponbare</strain>
    </source>
</reference>
<reference key="4">
    <citation type="journal article" date="2013" name="Rice">
        <title>Improvement of the Oryza sativa Nipponbare reference genome using next generation sequence and optical map data.</title>
        <authorList>
            <person name="Kawahara Y."/>
            <person name="de la Bastide M."/>
            <person name="Hamilton J.P."/>
            <person name="Kanamori H."/>
            <person name="McCombie W.R."/>
            <person name="Ouyang S."/>
            <person name="Schwartz D.C."/>
            <person name="Tanaka T."/>
            <person name="Wu J."/>
            <person name="Zhou S."/>
            <person name="Childs K.L."/>
            <person name="Davidson R.M."/>
            <person name="Lin H."/>
            <person name="Quesada-Ocampo L."/>
            <person name="Vaillancourt B."/>
            <person name="Sakai H."/>
            <person name="Lee S.S."/>
            <person name="Kim J."/>
            <person name="Numa H."/>
            <person name="Itoh T."/>
            <person name="Buell C.R."/>
            <person name="Matsumoto T."/>
        </authorList>
    </citation>
    <scope>GENOME REANNOTATION</scope>
    <source>
        <strain>cv. Nipponbare</strain>
    </source>
</reference>
<reference key="5">
    <citation type="journal article" date="2005" name="PLoS Biol.">
        <title>The genomes of Oryza sativa: a history of duplications.</title>
        <authorList>
            <person name="Yu J."/>
            <person name="Wang J."/>
            <person name="Lin W."/>
            <person name="Li S."/>
            <person name="Li H."/>
            <person name="Zhou J."/>
            <person name="Ni P."/>
            <person name="Dong W."/>
            <person name="Hu S."/>
            <person name="Zeng C."/>
            <person name="Zhang J."/>
            <person name="Zhang Y."/>
            <person name="Li R."/>
            <person name="Xu Z."/>
            <person name="Li S."/>
            <person name="Li X."/>
            <person name="Zheng H."/>
            <person name="Cong L."/>
            <person name="Lin L."/>
            <person name="Yin J."/>
            <person name="Geng J."/>
            <person name="Li G."/>
            <person name="Shi J."/>
            <person name="Liu J."/>
            <person name="Lv H."/>
            <person name="Li J."/>
            <person name="Wang J."/>
            <person name="Deng Y."/>
            <person name="Ran L."/>
            <person name="Shi X."/>
            <person name="Wang X."/>
            <person name="Wu Q."/>
            <person name="Li C."/>
            <person name="Ren X."/>
            <person name="Wang J."/>
            <person name="Wang X."/>
            <person name="Li D."/>
            <person name="Liu D."/>
            <person name="Zhang X."/>
            <person name="Ji Z."/>
            <person name="Zhao W."/>
            <person name="Sun Y."/>
            <person name="Zhang Z."/>
            <person name="Bao J."/>
            <person name="Han Y."/>
            <person name="Dong L."/>
            <person name="Ji J."/>
            <person name="Chen P."/>
            <person name="Wu S."/>
            <person name="Liu J."/>
            <person name="Xiao Y."/>
            <person name="Bu D."/>
            <person name="Tan J."/>
            <person name="Yang L."/>
            <person name="Ye C."/>
            <person name="Zhang J."/>
            <person name="Xu J."/>
            <person name="Zhou Y."/>
            <person name="Yu Y."/>
            <person name="Zhang B."/>
            <person name="Zhuang S."/>
            <person name="Wei H."/>
            <person name="Liu B."/>
            <person name="Lei M."/>
            <person name="Yu H."/>
            <person name="Li Y."/>
            <person name="Xu H."/>
            <person name="Wei S."/>
            <person name="He X."/>
            <person name="Fang L."/>
            <person name="Zhang Z."/>
            <person name="Zhang Y."/>
            <person name="Huang X."/>
            <person name="Su Z."/>
            <person name="Tong W."/>
            <person name="Li J."/>
            <person name="Tong Z."/>
            <person name="Li S."/>
            <person name="Ye J."/>
            <person name="Wang L."/>
            <person name="Fang L."/>
            <person name="Lei T."/>
            <person name="Chen C.-S."/>
            <person name="Chen H.-C."/>
            <person name="Xu Z."/>
            <person name="Li H."/>
            <person name="Huang H."/>
            <person name="Zhang F."/>
            <person name="Xu H."/>
            <person name="Li N."/>
            <person name="Zhao C."/>
            <person name="Li S."/>
            <person name="Dong L."/>
            <person name="Huang Y."/>
            <person name="Li L."/>
            <person name="Xi Y."/>
            <person name="Qi Q."/>
            <person name="Li W."/>
            <person name="Zhang B."/>
            <person name="Hu W."/>
            <person name="Zhang Y."/>
            <person name="Tian X."/>
            <person name="Jiao Y."/>
            <person name="Liang X."/>
            <person name="Jin J."/>
            <person name="Gao L."/>
            <person name="Zheng W."/>
            <person name="Hao B."/>
            <person name="Liu S.-M."/>
            <person name="Wang W."/>
            <person name="Yuan L."/>
            <person name="Cao M."/>
            <person name="McDermott J."/>
            <person name="Samudrala R."/>
            <person name="Wang J."/>
            <person name="Wong G.K.-S."/>
            <person name="Yang H."/>
        </authorList>
    </citation>
    <scope>NUCLEOTIDE SEQUENCE [LARGE SCALE GENOMIC DNA]</scope>
    <source>
        <strain>cv. Nipponbare</strain>
    </source>
</reference>
<reference key="6">
    <citation type="journal article" date="2003" name="Science">
        <title>Collection, mapping, and annotation of over 28,000 cDNA clones from japonica rice.</title>
        <authorList>
            <consortium name="The rice full-length cDNA consortium"/>
        </authorList>
    </citation>
    <scope>NUCLEOTIDE SEQUENCE [LARGE SCALE MRNA]</scope>
    <source>
        <strain>cv. Nipponbare</strain>
    </source>
</reference>
<gene>
    <name type="primary">AMY1.7</name>
    <name type="synonym">AMY3B</name>
    <name type="ordered locus">Os09g0457800</name>
    <name type="ordered locus">LOC_Os09g28420</name>
    <name type="ordered locus">LOC_Os09g28430</name>
    <name type="ORF">B1045B05.11</name>
    <name type="ORF">OsJ_29632</name>
</gene>
<evidence type="ECO:0000250" key="1"/>
<evidence type="ECO:0000250" key="2">
    <source>
        <dbReference type="UniProtKB" id="P00693"/>
    </source>
</evidence>
<evidence type="ECO:0000255" key="3"/>
<evidence type="ECO:0000305" key="4"/>
<proteinExistence type="evidence at transcript level"/>
<protein>
    <recommendedName>
        <fullName>Alpha-amylase isozyme 3C</fullName>
        <ecNumber evidence="2">3.2.1.1</ecNumber>
    </recommendedName>
    <alternativeName>
        <fullName>1,4-alpha-D-glucan glucanohydrolase</fullName>
    </alternativeName>
</protein>